<feature type="chain" id="PRO_0000321407" description="Adenine phosphoribosyltransferase">
    <location>
        <begin position="1"/>
        <end position="183"/>
    </location>
</feature>
<protein>
    <recommendedName>
        <fullName evidence="1">Adenine phosphoribosyltransferase</fullName>
        <shortName evidence="1">APRT</shortName>
        <ecNumber evidence="1">2.4.2.7</ecNumber>
    </recommendedName>
</protein>
<organism>
    <name type="scientific">Shewanella sp. (strain ANA-3)</name>
    <dbReference type="NCBI Taxonomy" id="94122"/>
    <lineage>
        <taxon>Bacteria</taxon>
        <taxon>Pseudomonadati</taxon>
        <taxon>Pseudomonadota</taxon>
        <taxon>Gammaproteobacteria</taxon>
        <taxon>Alteromonadales</taxon>
        <taxon>Shewanellaceae</taxon>
        <taxon>Shewanella</taxon>
    </lineage>
</organism>
<reference key="1">
    <citation type="submission" date="2006-09" db="EMBL/GenBank/DDBJ databases">
        <title>Complete sequence of chromosome 1 of Shewanella sp. ANA-3.</title>
        <authorList>
            <person name="Copeland A."/>
            <person name="Lucas S."/>
            <person name="Lapidus A."/>
            <person name="Barry K."/>
            <person name="Detter J.C."/>
            <person name="Glavina del Rio T."/>
            <person name="Hammon N."/>
            <person name="Israni S."/>
            <person name="Dalin E."/>
            <person name="Tice H."/>
            <person name="Pitluck S."/>
            <person name="Chertkov O."/>
            <person name="Brettin T."/>
            <person name="Bruce D."/>
            <person name="Han C."/>
            <person name="Tapia R."/>
            <person name="Gilna P."/>
            <person name="Schmutz J."/>
            <person name="Larimer F."/>
            <person name="Land M."/>
            <person name="Hauser L."/>
            <person name="Kyrpides N."/>
            <person name="Kim E."/>
            <person name="Newman D."/>
            <person name="Salticov C."/>
            <person name="Konstantinidis K."/>
            <person name="Klappenback J."/>
            <person name="Tiedje J."/>
            <person name="Richardson P."/>
        </authorList>
    </citation>
    <scope>NUCLEOTIDE SEQUENCE [LARGE SCALE GENOMIC DNA]</scope>
    <source>
        <strain>ANA-3</strain>
    </source>
</reference>
<evidence type="ECO:0000255" key="1">
    <source>
        <dbReference type="HAMAP-Rule" id="MF_00004"/>
    </source>
</evidence>
<proteinExistence type="inferred from homology"/>
<sequence length="183" mass="19806">MAMNTETLSLIKQSIKTIPNYPKEGILFRDVTSLLENAAAYKATIDLLVEQYRNKGFTKIVGTEARGFLFGAPLALELGIGFVPVRKPGKLPRATISQSYELEYGHDSLEIHTDAITANDKVLVVDDLLATGGTIEATVKLIRQLGGEVQDAAFVISLPDLGGEARLTALGLELVKLCEFEGE</sequence>
<accession>A0KY07</accession>
<name>APT_SHESA</name>
<comment type="function">
    <text evidence="1">Catalyzes a salvage reaction resulting in the formation of AMP, that is energically less costly than de novo synthesis.</text>
</comment>
<comment type="catalytic activity">
    <reaction evidence="1">
        <text>AMP + diphosphate = 5-phospho-alpha-D-ribose 1-diphosphate + adenine</text>
        <dbReference type="Rhea" id="RHEA:16609"/>
        <dbReference type="ChEBI" id="CHEBI:16708"/>
        <dbReference type="ChEBI" id="CHEBI:33019"/>
        <dbReference type="ChEBI" id="CHEBI:58017"/>
        <dbReference type="ChEBI" id="CHEBI:456215"/>
        <dbReference type="EC" id="2.4.2.7"/>
    </reaction>
</comment>
<comment type="pathway">
    <text evidence="1">Purine metabolism; AMP biosynthesis via salvage pathway; AMP from adenine: step 1/1.</text>
</comment>
<comment type="subunit">
    <text evidence="1">Homodimer.</text>
</comment>
<comment type="subcellular location">
    <subcellularLocation>
        <location evidence="1">Cytoplasm</location>
    </subcellularLocation>
</comment>
<comment type="similarity">
    <text evidence="1">Belongs to the purine/pyrimidine phosphoribosyltransferase family.</text>
</comment>
<keyword id="KW-0963">Cytoplasm</keyword>
<keyword id="KW-0328">Glycosyltransferase</keyword>
<keyword id="KW-0660">Purine salvage</keyword>
<keyword id="KW-0808">Transferase</keyword>
<gene>
    <name evidence="1" type="primary">apt</name>
    <name type="ordered locus">Shewana3_2447</name>
</gene>
<dbReference type="EC" id="2.4.2.7" evidence="1"/>
<dbReference type="EMBL" id="CP000469">
    <property type="protein sequence ID" value="ABK48676.1"/>
    <property type="molecule type" value="Genomic_DNA"/>
</dbReference>
<dbReference type="RefSeq" id="WP_011623016.1">
    <property type="nucleotide sequence ID" value="NC_008577.1"/>
</dbReference>
<dbReference type="SMR" id="A0KY07"/>
<dbReference type="STRING" id="94122.Shewana3_2447"/>
<dbReference type="GeneID" id="94728382"/>
<dbReference type="KEGG" id="shn:Shewana3_2447"/>
<dbReference type="eggNOG" id="COG0503">
    <property type="taxonomic scope" value="Bacteria"/>
</dbReference>
<dbReference type="HOGENOM" id="CLU_063339_3_0_6"/>
<dbReference type="OrthoDB" id="9803963at2"/>
<dbReference type="UniPathway" id="UPA00588">
    <property type="reaction ID" value="UER00646"/>
</dbReference>
<dbReference type="Proteomes" id="UP000002589">
    <property type="component" value="Chromosome"/>
</dbReference>
<dbReference type="GO" id="GO:0005737">
    <property type="term" value="C:cytoplasm"/>
    <property type="evidence" value="ECO:0007669"/>
    <property type="project" value="UniProtKB-SubCell"/>
</dbReference>
<dbReference type="GO" id="GO:0002055">
    <property type="term" value="F:adenine binding"/>
    <property type="evidence" value="ECO:0007669"/>
    <property type="project" value="TreeGrafter"/>
</dbReference>
<dbReference type="GO" id="GO:0003999">
    <property type="term" value="F:adenine phosphoribosyltransferase activity"/>
    <property type="evidence" value="ECO:0007669"/>
    <property type="project" value="UniProtKB-UniRule"/>
</dbReference>
<dbReference type="GO" id="GO:0016208">
    <property type="term" value="F:AMP binding"/>
    <property type="evidence" value="ECO:0007669"/>
    <property type="project" value="TreeGrafter"/>
</dbReference>
<dbReference type="GO" id="GO:0006168">
    <property type="term" value="P:adenine salvage"/>
    <property type="evidence" value="ECO:0007669"/>
    <property type="project" value="InterPro"/>
</dbReference>
<dbReference type="GO" id="GO:0044209">
    <property type="term" value="P:AMP salvage"/>
    <property type="evidence" value="ECO:0007669"/>
    <property type="project" value="UniProtKB-UniRule"/>
</dbReference>
<dbReference type="GO" id="GO:0006166">
    <property type="term" value="P:purine ribonucleoside salvage"/>
    <property type="evidence" value="ECO:0007669"/>
    <property type="project" value="UniProtKB-KW"/>
</dbReference>
<dbReference type="CDD" id="cd06223">
    <property type="entry name" value="PRTases_typeI"/>
    <property type="match status" value="1"/>
</dbReference>
<dbReference type="FunFam" id="3.40.50.2020:FF:000004">
    <property type="entry name" value="Adenine phosphoribosyltransferase"/>
    <property type="match status" value="1"/>
</dbReference>
<dbReference type="Gene3D" id="3.40.50.2020">
    <property type="match status" value="1"/>
</dbReference>
<dbReference type="HAMAP" id="MF_00004">
    <property type="entry name" value="Aden_phosphoribosyltr"/>
    <property type="match status" value="1"/>
</dbReference>
<dbReference type="InterPro" id="IPR005764">
    <property type="entry name" value="Ade_phspho_trans"/>
</dbReference>
<dbReference type="InterPro" id="IPR000836">
    <property type="entry name" value="PRibTrfase_dom"/>
</dbReference>
<dbReference type="InterPro" id="IPR029057">
    <property type="entry name" value="PRTase-like"/>
</dbReference>
<dbReference type="InterPro" id="IPR050054">
    <property type="entry name" value="UPRTase/APRTase"/>
</dbReference>
<dbReference type="NCBIfam" id="TIGR01090">
    <property type="entry name" value="apt"/>
    <property type="match status" value="1"/>
</dbReference>
<dbReference type="NCBIfam" id="NF002632">
    <property type="entry name" value="PRK02304.1-1"/>
    <property type="match status" value="1"/>
</dbReference>
<dbReference type="NCBIfam" id="NF002634">
    <property type="entry name" value="PRK02304.1-3"/>
    <property type="match status" value="1"/>
</dbReference>
<dbReference type="NCBIfam" id="NF002636">
    <property type="entry name" value="PRK02304.1-5"/>
    <property type="match status" value="1"/>
</dbReference>
<dbReference type="PANTHER" id="PTHR32315">
    <property type="entry name" value="ADENINE PHOSPHORIBOSYLTRANSFERASE"/>
    <property type="match status" value="1"/>
</dbReference>
<dbReference type="PANTHER" id="PTHR32315:SF3">
    <property type="entry name" value="ADENINE PHOSPHORIBOSYLTRANSFERASE"/>
    <property type="match status" value="1"/>
</dbReference>
<dbReference type="Pfam" id="PF00156">
    <property type="entry name" value="Pribosyltran"/>
    <property type="match status" value="1"/>
</dbReference>
<dbReference type="SUPFAM" id="SSF53271">
    <property type="entry name" value="PRTase-like"/>
    <property type="match status" value="1"/>
</dbReference>
<dbReference type="PROSITE" id="PS00103">
    <property type="entry name" value="PUR_PYR_PR_TRANSFER"/>
    <property type="match status" value="1"/>
</dbReference>